<dbReference type="EMBL" id="AE003852">
    <property type="protein sequence ID" value="AAF93533.1"/>
    <property type="molecule type" value="Genomic_DNA"/>
</dbReference>
<dbReference type="PIR" id="B82332">
    <property type="entry name" value="B82332"/>
</dbReference>
<dbReference type="RefSeq" id="NP_230014.1">
    <property type="nucleotide sequence ID" value="NC_002505.1"/>
</dbReference>
<dbReference type="RefSeq" id="WP_001138050.1">
    <property type="nucleotide sequence ID" value="NZ_LT906614.1"/>
</dbReference>
<dbReference type="SMR" id="Q9KUZ8"/>
<dbReference type="STRING" id="243277.VC_0360"/>
<dbReference type="DNASU" id="2615039"/>
<dbReference type="EnsemblBacteria" id="AAF93533">
    <property type="protein sequence ID" value="AAF93533"/>
    <property type="gene ID" value="VC_0360"/>
</dbReference>
<dbReference type="GeneID" id="94014858"/>
<dbReference type="KEGG" id="vch:VC_0360"/>
<dbReference type="PATRIC" id="fig|243277.26.peg.337"/>
<dbReference type="eggNOG" id="COG0049">
    <property type="taxonomic scope" value="Bacteria"/>
</dbReference>
<dbReference type="HOGENOM" id="CLU_072226_1_1_6"/>
<dbReference type="Proteomes" id="UP000000584">
    <property type="component" value="Chromosome 1"/>
</dbReference>
<dbReference type="GO" id="GO:0022627">
    <property type="term" value="C:cytosolic small ribosomal subunit"/>
    <property type="evidence" value="ECO:0000318"/>
    <property type="project" value="GO_Central"/>
</dbReference>
<dbReference type="GO" id="GO:0005840">
    <property type="term" value="C:ribosome"/>
    <property type="evidence" value="ECO:0000318"/>
    <property type="project" value="GO_Central"/>
</dbReference>
<dbReference type="GO" id="GO:0003729">
    <property type="term" value="F:mRNA binding"/>
    <property type="evidence" value="ECO:0000318"/>
    <property type="project" value="GO_Central"/>
</dbReference>
<dbReference type="GO" id="GO:0019843">
    <property type="term" value="F:rRNA binding"/>
    <property type="evidence" value="ECO:0000318"/>
    <property type="project" value="GO_Central"/>
</dbReference>
<dbReference type="GO" id="GO:0003735">
    <property type="term" value="F:structural constituent of ribosome"/>
    <property type="evidence" value="ECO:0000318"/>
    <property type="project" value="GO_Central"/>
</dbReference>
<dbReference type="GO" id="GO:0000049">
    <property type="term" value="F:tRNA binding"/>
    <property type="evidence" value="ECO:0007669"/>
    <property type="project" value="UniProtKB-UniRule"/>
</dbReference>
<dbReference type="GO" id="GO:0000028">
    <property type="term" value="P:ribosomal small subunit assembly"/>
    <property type="evidence" value="ECO:0000318"/>
    <property type="project" value="GO_Central"/>
</dbReference>
<dbReference type="GO" id="GO:0006412">
    <property type="term" value="P:translation"/>
    <property type="evidence" value="ECO:0000318"/>
    <property type="project" value="GO_Central"/>
</dbReference>
<dbReference type="CDD" id="cd14869">
    <property type="entry name" value="uS7_Bacteria"/>
    <property type="match status" value="1"/>
</dbReference>
<dbReference type="FunFam" id="1.10.455.10:FF:000001">
    <property type="entry name" value="30S ribosomal protein S7"/>
    <property type="match status" value="1"/>
</dbReference>
<dbReference type="Gene3D" id="1.10.455.10">
    <property type="entry name" value="Ribosomal protein S7 domain"/>
    <property type="match status" value="1"/>
</dbReference>
<dbReference type="HAMAP" id="MF_00480_B">
    <property type="entry name" value="Ribosomal_uS7_B"/>
    <property type="match status" value="1"/>
</dbReference>
<dbReference type="InterPro" id="IPR000235">
    <property type="entry name" value="Ribosomal_uS7"/>
</dbReference>
<dbReference type="InterPro" id="IPR005717">
    <property type="entry name" value="Ribosomal_uS7_bac/org-type"/>
</dbReference>
<dbReference type="InterPro" id="IPR020606">
    <property type="entry name" value="Ribosomal_uS7_CS"/>
</dbReference>
<dbReference type="InterPro" id="IPR023798">
    <property type="entry name" value="Ribosomal_uS7_dom"/>
</dbReference>
<dbReference type="InterPro" id="IPR036823">
    <property type="entry name" value="Ribosomal_uS7_dom_sf"/>
</dbReference>
<dbReference type="NCBIfam" id="TIGR01029">
    <property type="entry name" value="rpsG_bact"/>
    <property type="match status" value="1"/>
</dbReference>
<dbReference type="PANTHER" id="PTHR11205">
    <property type="entry name" value="RIBOSOMAL PROTEIN S7"/>
    <property type="match status" value="1"/>
</dbReference>
<dbReference type="Pfam" id="PF00177">
    <property type="entry name" value="Ribosomal_S7"/>
    <property type="match status" value="1"/>
</dbReference>
<dbReference type="PIRSF" id="PIRSF002122">
    <property type="entry name" value="RPS7p_RPS7a_RPS5e_RPS7o"/>
    <property type="match status" value="1"/>
</dbReference>
<dbReference type="SUPFAM" id="SSF47973">
    <property type="entry name" value="Ribosomal protein S7"/>
    <property type="match status" value="1"/>
</dbReference>
<dbReference type="PROSITE" id="PS00052">
    <property type="entry name" value="RIBOSOMAL_S7"/>
    <property type="match status" value="1"/>
</dbReference>
<keyword id="KW-1185">Reference proteome</keyword>
<keyword id="KW-0687">Ribonucleoprotein</keyword>
<keyword id="KW-0689">Ribosomal protein</keyword>
<keyword id="KW-0694">RNA-binding</keyword>
<keyword id="KW-0699">rRNA-binding</keyword>
<keyword id="KW-0820">tRNA-binding</keyword>
<proteinExistence type="inferred from homology"/>
<organism>
    <name type="scientific">Vibrio cholerae serotype O1 (strain ATCC 39315 / El Tor Inaba N16961)</name>
    <dbReference type="NCBI Taxonomy" id="243277"/>
    <lineage>
        <taxon>Bacteria</taxon>
        <taxon>Pseudomonadati</taxon>
        <taxon>Pseudomonadota</taxon>
        <taxon>Gammaproteobacteria</taxon>
        <taxon>Vibrionales</taxon>
        <taxon>Vibrionaceae</taxon>
        <taxon>Vibrio</taxon>
    </lineage>
</organism>
<accession>Q9KUZ8</accession>
<reference key="1">
    <citation type="journal article" date="2000" name="Nature">
        <title>DNA sequence of both chromosomes of the cholera pathogen Vibrio cholerae.</title>
        <authorList>
            <person name="Heidelberg J.F."/>
            <person name="Eisen J.A."/>
            <person name="Nelson W.C."/>
            <person name="Clayton R.A."/>
            <person name="Gwinn M.L."/>
            <person name="Dodson R.J."/>
            <person name="Haft D.H."/>
            <person name="Hickey E.K."/>
            <person name="Peterson J.D."/>
            <person name="Umayam L.A."/>
            <person name="Gill S.R."/>
            <person name="Nelson K.E."/>
            <person name="Read T.D."/>
            <person name="Tettelin H."/>
            <person name="Richardson D.L."/>
            <person name="Ermolaeva M.D."/>
            <person name="Vamathevan J.J."/>
            <person name="Bass S."/>
            <person name="Qin H."/>
            <person name="Dragoi I."/>
            <person name="Sellers P."/>
            <person name="McDonald L.A."/>
            <person name="Utterback T.R."/>
            <person name="Fleischmann R.D."/>
            <person name="Nierman W.C."/>
            <person name="White O."/>
            <person name="Salzberg S.L."/>
            <person name="Smith H.O."/>
            <person name="Colwell R.R."/>
            <person name="Mekalanos J.J."/>
            <person name="Venter J.C."/>
            <person name="Fraser C.M."/>
        </authorList>
    </citation>
    <scope>NUCLEOTIDE SEQUENCE [LARGE SCALE GENOMIC DNA]</scope>
    <source>
        <strain>ATCC 39315 / El Tor Inaba N16961</strain>
    </source>
</reference>
<name>RS7_VIBCH</name>
<comment type="function">
    <text evidence="1">One of the primary rRNA binding proteins, it binds directly to 16S rRNA where it nucleates assembly of the head domain of the 30S subunit. Is located at the subunit interface close to the decoding center, probably blocks exit of the E-site tRNA.</text>
</comment>
<comment type="subunit">
    <text evidence="1">Part of the 30S ribosomal subunit. Contacts proteins S9 and S11.</text>
</comment>
<comment type="similarity">
    <text evidence="1">Belongs to the universal ribosomal protein uS7 family.</text>
</comment>
<sequence>MPRRRVIGQRKILPDPKFKSELLAKFVNILMVDGKKSTAEKIVYTALDTMAEKSGKDHLAVFEEALENVRPAVEVKSRRVGGSTYQVPVEVRPVRRNALAMRWLVEAARKRGEKSMAARLAAEMLDAAENKGSAVKKREDVHRMAEANKAFAHYRW</sequence>
<gene>
    <name evidence="1" type="primary">rpsG</name>
    <name type="ordered locus">VC_0360</name>
</gene>
<protein>
    <recommendedName>
        <fullName evidence="1">Small ribosomal subunit protein uS7</fullName>
    </recommendedName>
    <alternativeName>
        <fullName evidence="2">30S ribosomal protein S7</fullName>
    </alternativeName>
</protein>
<feature type="chain" id="PRO_0000124377" description="Small ribosomal subunit protein uS7">
    <location>
        <begin position="1"/>
        <end position="156"/>
    </location>
</feature>
<evidence type="ECO:0000255" key="1">
    <source>
        <dbReference type="HAMAP-Rule" id="MF_00480"/>
    </source>
</evidence>
<evidence type="ECO:0000305" key="2"/>